<comment type="function">
    <text>Involved in oxygen transport from the lung to the various peripheral tissues.</text>
</comment>
<comment type="subunit">
    <text>Heterotetramer of two alpha chains and two beta chains.</text>
</comment>
<comment type="tissue specificity">
    <text>Red blood cells.</text>
</comment>
<comment type="polymorphism">
    <text evidence="2">There are two alleles. The sequence shown is that of alpha-A.</text>
</comment>
<comment type="similarity">
    <text evidence="1">Belongs to the globin family.</text>
</comment>
<reference key="1">
    <citation type="journal article" date="1988" name="Biol. Chem. Hoppe-Seyler">
        <title>High-altitude respiration of birds. Structural adaptations in the major and minor hemoglobin components of adult Ruppell's Griffon (Gyps rueppellii, Aegypiinae): a new molecular pattern for hypoxic tolerance.</title>
        <authorList>
            <person name="Hiebl I."/>
            <person name="Weber R.E."/>
            <person name="Schneeganss D."/>
            <person name="Kosters J."/>
            <person name="Braunitzer G."/>
        </authorList>
    </citation>
    <scope>PROTEIN SEQUENCE</scope>
</reference>
<name>HBA_GYPRU</name>
<protein>
    <recommendedName>
        <fullName>Hemoglobin subunit alpha-A/A'</fullName>
    </recommendedName>
    <alternativeName>
        <fullName>Alpha-A/A'-globin</fullName>
    </alternativeName>
    <alternativeName>
        <fullName>Hemoglobin alpha-A/A' chain</fullName>
    </alternativeName>
</protein>
<feature type="chain" id="PRO_0000052647" description="Hemoglobin subunit alpha-A/A'">
    <location>
        <begin position="1"/>
        <end position="141"/>
    </location>
</feature>
<feature type="domain" description="Globin" evidence="1">
    <location>
        <begin position="1"/>
        <end position="141"/>
    </location>
</feature>
<feature type="binding site" evidence="1">
    <location>
        <position position="58"/>
    </location>
    <ligand>
        <name>O2</name>
        <dbReference type="ChEBI" id="CHEBI:15379"/>
    </ligand>
</feature>
<feature type="binding site" description="proximal binding residue" evidence="1">
    <location>
        <position position="87"/>
    </location>
    <ligand>
        <name>heme b</name>
        <dbReference type="ChEBI" id="CHEBI:60344"/>
    </ligand>
    <ligandPart>
        <name>Fe</name>
        <dbReference type="ChEBI" id="CHEBI:18248"/>
    </ligandPart>
</feature>
<feature type="sequence variant" description="In alpha-A'.">
    <original>T</original>
    <variation>I</variation>
    <location>
        <position position="34"/>
    </location>
</feature>
<gene>
    <name type="primary">HBAA</name>
</gene>
<keyword id="KW-0903">Direct protein sequencing</keyword>
<keyword id="KW-0349">Heme</keyword>
<keyword id="KW-0408">Iron</keyword>
<keyword id="KW-0479">Metal-binding</keyword>
<keyword id="KW-0561">Oxygen transport</keyword>
<keyword id="KW-0813">Transport</keyword>
<organism>
    <name type="scientific">Gyps rueppelli</name>
    <name type="common">Rueppell's griffon</name>
    <name type="synonym">Vultur rueppellii</name>
    <dbReference type="NCBI Taxonomy" id="8967"/>
    <lineage>
        <taxon>Eukaryota</taxon>
        <taxon>Metazoa</taxon>
        <taxon>Chordata</taxon>
        <taxon>Craniata</taxon>
        <taxon>Vertebrata</taxon>
        <taxon>Euteleostomi</taxon>
        <taxon>Archelosauria</taxon>
        <taxon>Archosauria</taxon>
        <taxon>Dinosauria</taxon>
        <taxon>Saurischia</taxon>
        <taxon>Theropoda</taxon>
        <taxon>Coelurosauria</taxon>
        <taxon>Aves</taxon>
        <taxon>Neognathae</taxon>
        <taxon>Neoaves</taxon>
        <taxon>Telluraves</taxon>
        <taxon>Accipitrimorphae</taxon>
        <taxon>Accipitriformes</taxon>
        <taxon>Accipitridae</taxon>
        <taxon>Accipitrinae</taxon>
        <taxon>Gyps</taxon>
    </lineage>
</organism>
<accession>P08256</accession>
<sequence>VLSANDKTNVKNVFTKITGHAEDYGAETLERMFTTYPPTKTYFPHFDLHHGSAQIKAHGKKVVGALIEAVNHIDDIAGALSKLSDLHAQKLRVDPVNFKLLGQCFLVVVAIHHPSVLTPEVHASLDKFLCAVGNVLTAKYR</sequence>
<proteinExistence type="evidence at protein level"/>
<evidence type="ECO:0000255" key="1">
    <source>
        <dbReference type="PROSITE-ProRule" id="PRU00238"/>
    </source>
</evidence>
<evidence type="ECO:0000269" key="2">
    <source>
    </source>
</evidence>
<dbReference type="PIR" id="S00527">
    <property type="entry name" value="HAGRAR"/>
</dbReference>
<dbReference type="SMR" id="P08256"/>
<dbReference type="GO" id="GO:0072562">
    <property type="term" value="C:blood microparticle"/>
    <property type="evidence" value="ECO:0007669"/>
    <property type="project" value="TreeGrafter"/>
</dbReference>
<dbReference type="GO" id="GO:0031838">
    <property type="term" value="C:haptoglobin-hemoglobin complex"/>
    <property type="evidence" value="ECO:0007669"/>
    <property type="project" value="TreeGrafter"/>
</dbReference>
<dbReference type="GO" id="GO:0005833">
    <property type="term" value="C:hemoglobin complex"/>
    <property type="evidence" value="ECO:0007669"/>
    <property type="project" value="InterPro"/>
</dbReference>
<dbReference type="GO" id="GO:0031720">
    <property type="term" value="F:haptoglobin binding"/>
    <property type="evidence" value="ECO:0007669"/>
    <property type="project" value="TreeGrafter"/>
</dbReference>
<dbReference type="GO" id="GO:0020037">
    <property type="term" value="F:heme binding"/>
    <property type="evidence" value="ECO:0007669"/>
    <property type="project" value="InterPro"/>
</dbReference>
<dbReference type="GO" id="GO:0005506">
    <property type="term" value="F:iron ion binding"/>
    <property type="evidence" value="ECO:0007669"/>
    <property type="project" value="InterPro"/>
</dbReference>
<dbReference type="GO" id="GO:0043177">
    <property type="term" value="F:organic acid binding"/>
    <property type="evidence" value="ECO:0007669"/>
    <property type="project" value="TreeGrafter"/>
</dbReference>
<dbReference type="GO" id="GO:0019825">
    <property type="term" value="F:oxygen binding"/>
    <property type="evidence" value="ECO:0007669"/>
    <property type="project" value="InterPro"/>
</dbReference>
<dbReference type="GO" id="GO:0005344">
    <property type="term" value="F:oxygen carrier activity"/>
    <property type="evidence" value="ECO:0007669"/>
    <property type="project" value="UniProtKB-KW"/>
</dbReference>
<dbReference type="GO" id="GO:0004601">
    <property type="term" value="F:peroxidase activity"/>
    <property type="evidence" value="ECO:0007669"/>
    <property type="project" value="TreeGrafter"/>
</dbReference>
<dbReference type="GO" id="GO:0042744">
    <property type="term" value="P:hydrogen peroxide catabolic process"/>
    <property type="evidence" value="ECO:0007669"/>
    <property type="project" value="TreeGrafter"/>
</dbReference>
<dbReference type="CDD" id="cd08927">
    <property type="entry name" value="Hb-alpha-like"/>
    <property type="match status" value="1"/>
</dbReference>
<dbReference type="FunFam" id="1.10.490.10:FF:000002">
    <property type="entry name" value="Hemoglobin subunit alpha"/>
    <property type="match status" value="1"/>
</dbReference>
<dbReference type="Gene3D" id="1.10.490.10">
    <property type="entry name" value="Globins"/>
    <property type="match status" value="1"/>
</dbReference>
<dbReference type="InterPro" id="IPR000971">
    <property type="entry name" value="Globin"/>
</dbReference>
<dbReference type="InterPro" id="IPR009050">
    <property type="entry name" value="Globin-like_sf"/>
</dbReference>
<dbReference type="InterPro" id="IPR012292">
    <property type="entry name" value="Globin/Proto"/>
</dbReference>
<dbReference type="InterPro" id="IPR002338">
    <property type="entry name" value="Hemoglobin_a-typ"/>
</dbReference>
<dbReference type="InterPro" id="IPR050056">
    <property type="entry name" value="Hemoglobin_oxygen_transport"/>
</dbReference>
<dbReference type="InterPro" id="IPR002339">
    <property type="entry name" value="Hemoglobin_pi"/>
</dbReference>
<dbReference type="PANTHER" id="PTHR11442">
    <property type="entry name" value="HEMOGLOBIN FAMILY MEMBER"/>
    <property type="match status" value="1"/>
</dbReference>
<dbReference type="PANTHER" id="PTHR11442:SF48">
    <property type="entry name" value="HEMOGLOBIN SUBUNIT ALPHA"/>
    <property type="match status" value="1"/>
</dbReference>
<dbReference type="Pfam" id="PF00042">
    <property type="entry name" value="Globin"/>
    <property type="match status" value="1"/>
</dbReference>
<dbReference type="PRINTS" id="PR00612">
    <property type="entry name" value="ALPHAHAEM"/>
</dbReference>
<dbReference type="PRINTS" id="PR00815">
    <property type="entry name" value="PIHAEM"/>
</dbReference>
<dbReference type="SUPFAM" id="SSF46458">
    <property type="entry name" value="Globin-like"/>
    <property type="match status" value="1"/>
</dbReference>
<dbReference type="PROSITE" id="PS01033">
    <property type="entry name" value="GLOBIN"/>
    <property type="match status" value="1"/>
</dbReference>